<comment type="function">
    <text evidence="1">Chaperone protein involved in the assembly of the mitochondrial NADH:ubiquinone oxidoreductase complex (complex I). Participates in constructing the membrane arm of complex I (By similarity).</text>
</comment>
<comment type="subunit">
    <text evidence="1">Associates with the intermediate 315 kDa subcomplex of incompletely assembled complex I.</text>
</comment>
<comment type="subcellular location">
    <subcellularLocation>
        <location evidence="1">Mitochondrion membrane</location>
        <topology evidence="1">Multi-pass membrane protein</topology>
    </subcellularLocation>
</comment>
<comment type="similarity">
    <text evidence="3">Belongs to the Tim17/Tim22/Tim23 family.</text>
</comment>
<accession>Q568N3</accession>
<keyword id="KW-0143">Chaperone</keyword>
<keyword id="KW-0472">Membrane</keyword>
<keyword id="KW-0496">Mitochondrion</keyword>
<keyword id="KW-1185">Reference proteome</keyword>
<keyword id="KW-0812">Transmembrane</keyword>
<keyword id="KW-1133">Transmembrane helix</keyword>
<sequence length="292" mass="32372">MCTAVRQDLSLKCGGTDVKQPGDSQPGHLRALLGFTLPSVYASDSSTQILPKHIGKPEFPDTGWDRIKDLFYNVEGQYTEELRNVVKSGIASAIVGMIYGGLPGARHARQRFIQCSQAEIYRNRVDAVRAAHNAAIRGFLRFGWRWSWRVAAFVTLFNTVNTGLTVYRDQNALSHFAVSGAVTGGVFRLNLGLRGLLSGTIIGVILGFPAGVLILGLQNLGGETMRDKRRRERRELHELRVTEWNARLKVTDDLIGEMSSLKHQDSEIDLQQVEELLSQPRNGNAAKGPYNQ</sequence>
<gene>
    <name type="primary">timmdc1</name>
    <name type="ORF">zgc:110196</name>
</gene>
<organism>
    <name type="scientific">Danio rerio</name>
    <name type="common">Zebrafish</name>
    <name type="synonym">Brachydanio rerio</name>
    <dbReference type="NCBI Taxonomy" id="7955"/>
    <lineage>
        <taxon>Eukaryota</taxon>
        <taxon>Metazoa</taxon>
        <taxon>Chordata</taxon>
        <taxon>Craniata</taxon>
        <taxon>Vertebrata</taxon>
        <taxon>Euteleostomi</taxon>
        <taxon>Actinopterygii</taxon>
        <taxon>Neopterygii</taxon>
        <taxon>Teleostei</taxon>
        <taxon>Ostariophysi</taxon>
        <taxon>Cypriniformes</taxon>
        <taxon>Danionidae</taxon>
        <taxon>Danioninae</taxon>
        <taxon>Danio</taxon>
    </lineage>
</organism>
<dbReference type="EMBL" id="BC092788">
    <property type="protein sequence ID" value="AAH92788.1"/>
    <property type="molecule type" value="mRNA"/>
</dbReference>
<dbReference type="RefSeq" id="NP_001017828.1">
    <property type="nucleotide sequence ID" value="NM_001017828.1"/>
</dbReference>
<dbReference type="FunCoup" id="Q568N3">
    <property type="interactions" value="934"/>
</dbReference>
<dbReference type="STRING" id="7955.ENSDARP00000069984"/>
<dbReference type="PaxDb" id="7955-ENSDARP00000069984"/>
<dbReference type="GeneID" id="550526"/>
<dbReference type="KEGG" id="dre:550526"/>
<dbReference type="AGR" id="ZFIN:ZDB-GENE-050417-369"/>
<dbReference type="CTD" id="51300"/>
<dbReference type="ZFIN" id="ZDB-GENE-050417-369">
    <property type="gene designation" value="timmdc1"/>
</dbReference>
<dbReference type="eggNOG" id="KOG4608">
    <property type="taxonomic scope" value="Eukaryota"/>
</dbReference>
<dbReference type="InParanoid" id="Q568N3"/>
<dbReference type="OrthoDB" id="5826189at2759"/>
<dbReference type="PhylomeDB" id="Q568N3"/>
<dbReference type="PRO" id="PR:Q568N3"/>
<dbReference type="Proteomes" id="UP000000437">
    <property type="component" value="Chromosome 1"/>
</dbReference>
<dbReference type="GO" id="GO:0031966">
    <property type="term" value="C:mitochondrial membrane"/>
    <property type="evidence" value="ECO:0007669"/>
    <property type="project" value="UniProtKB-SubCell"/>
</dbReference>
<dbReference type="GO" id="GO:0005739">
    <property type="term" value="C:mitochondrion"/>
    <property type="evidence" value="ECO:0000318"/>
    <property type="project" value="GO_Central"/>
</dbReference>
<dbReference type="GO" id="GO:0032981">
    <property type="term" value="P:mitochondrial respiratory chain complex I assembly"/>
    <property type="evidence" value="ECO:0007669"/>
    <property type="project" value="InterPro"/>
</dbReference>
<dbReference type="InterPro" id="IPR055299">
    <property type="entry name" value="TIMMDC1"/>
</dbReference>
<dbReference type="PANTHER" id="PTHR13002">
    <property type="entry name" value="C3ORF1 PROTEIN-RELATED"/>
    <property type="match status" value="1"/>
</dbReference>
<dbReference type="PANTHER" id="PTHR13002:SF1">
    <property type="entry name" value="COMPLEX I ASSEMBLY FACTOR TIMMDC1, MITOCHONDRIAL"/>
    <property type="match status" value="1"/>
</dbReference>
<dbReference type="Pfam" id="PF02466">
    <property type="entry name" value="Tim17"/>
    <property type="match status" value="1"/>
</dbReference>
<reference key="1">
    <citation type="submission" date="2005-04" db="EMBL/GenBank/DDBJ databases">
        <authorList>
            <consortium name="NIH - Zebrafish Gene Collection (ZGC) project"/>
        </authorList>
    </citation>
    <scope>NUCLEOTIDE SEQUENCE [LARGE SCALE MRNA]</scope>
</reference>
<evidence type="ECO:0000250" key="1"/>
<evidence type="ECO:0000255" key="2"/>
<evidence type="ECO:0000305" key="3"/>
<proteinExistence type="evidence at transcript level"/>
<name>TIDC1_DANRE</name>
<feature type="chain" id="PRO_0000252482" description="Complex I assembly factor TIMMDC1, mitochondrial">
    <location>
        <begin position="1"/>
        <end position="292"/>
    </location>
</feature>
<feature type="transmembrane region" description="Helical" evidence="2">
    <location>
        <begin position="146"/>
        <end position="168"/>
    </location>
</feature>
<feature type="transmembrane region" description="Helical" evidence="2">
    <location>
        <begin position="195"/>
        <end position="215"/>
    </location>
</feature>
<protein>
    <recommendedName>
        <fullName>Complex I assembly factor TIMMDC1, mitochondrial</fullName>
    </recommendedName>
    <alternativeName>
        <fullName>Translocase of inner mitochondrial membrane domain-containing protein 1</fullName>
        <shortName>TIMM domain containing-protein 1</shortName>
    </alternativeName>
</protein>